<keyword id="KW-0002">3D-structure</keyword>
<keyword id="KW-0456">Lyase</keyword>
<keyword id="KW-0479">Metal-binding</keyword>
<keyword id="KW-1185">Reference proteome</keyword>
<organism>
    <name type="scientific">Pseudomonas aeruginosa (strain ATCC 15692 / DSM 22644 / CIP 104116 / JCM 14847 / LMG 12228 / 1C / PRS 101 / PAO1)</name>
    <dbReference type="NCBI Taxonomy" id="208964"/>
    <lineage>
        <taxon>Bacteria</taxon>
        <taxon>Pseudomonadati</taxon>
        <taxon>Pseudomonadota</taxon>
        <taxon>Gammaproteobacteria</taxon>
        <taxon>Pseudomonadales</taxon>
        <taxon>Pseudomonadaceae</taxon>
        <taxon>Pseudomonas</taxon>
    </lineage>
</organism>
<name>RRAAH_PSEAE</name>
<proteinExistence type="evidence at protein level"/>
<feature type="chain" id="PRO_0000209629" description="Putative 4-hydroxy-4-methyl-2-oxoglutarate aldolase">
    <location>
        <begin position="1"/>
        <end position="162"/>
    </location>
</feature>
<feature type="binding site" evidence="1">
    <location>
        <begin position="75"/>
        <end position="78"/>
    </location>
    <ligand>
        <name>substrate</name>
    </ligand>
</feature>
<feature type="binding site" evidence="1">
    <location>
        <position position="97"/>
    </location>
    <ligand>
        <name>substrate</name>
    </ligand>
</feature>
<feature type="binding site" evidence="1">
    <location>
        <position position="98"/>
    </location>
    <ligand>
        <name>a divalent metal cation</name>
        <dbReference type="ChEBI" id="CHEBI:60240"/>
    </ligand>
</feature>
<feature type="helix" evidence="3">
    <location>
        <begin position="5"/>
        <end position="11"/>
    </location>
</feature>
<feature type="turn" evidence="3">
    <location>
        <begin position="13"/>
        <end position="15"/>
    </location>
</feature>
<feature type="strand" evidence="3">
    <location>
        <begin position="32"/>
        <end position="40"/>
    </location>
</feature>
<feature type="helix" evidence="3">
    <location>
        <begin position="46"/>
        <end position="52"/>
    </location>
</feature>
<feature type="strand" evidence="3">
    <location>
        <begin position="59"/>
        <end position="64"/>
    </location>
</feature>
<feature type="strand" evidence="3">
    <location>
        <begin position="69"/>
        <end position="73"/>
    </location>
</feature>
<feature type="helix" evidence="3">
    <location>
        <begin position="76"/>
        <end position="84"/>
    </location>
</feature>
<feature type="strand" evidence="3">
    <location>
        <begin position="89"/>
        <end position="96"/>
    </location>
</feature>
<feature type="helix" evidence="3">
    <location>
        <begin position="99"/>
        <end position="102"/>
    </location>
</feature>
<feature type="strand" evidence="3">
    <location>
        <begin position="105"/>
        <end position="114"/>
    </location>
</feature>
<feature type="strand" evidence="3">
    <location>
        <begin position="126"/>
        <end position="128"/>
    </location>
</feature>
<feature type="strand" evidence="3">
    <location>
        <begin position="131"/>
        <end position="133"/>
    </location>
</feature>
<feature type="strand" evidence="3">
    <location>
        <begin position="136"/>
        <end position="138"/>
    </location>
</feature>
<feature type="strand" evidence="3">
    <location>
        <begin position="142"/>
        <end position="146"/>
    </location>
</feature>
<feature type="strand" evidence="3">
    <location>
        <begin position="151"/>
        <end position="156"/>
    </location>
</feature>
<evidence type="ECO:0000250" key="1"/>
<evidence type="ECO:0000305" key="2"/>
<evidence type="ECO:0007829" key="3">
    <source>
        <dbReference type="PDB" id="3C8O"/>
    </source>
</evidence>
<reference key="1">
    <citation type="journal article" date="2000" name="Nature">
        <title>Complete genome sequence of Pseudomonas aeruginosa PAO1, an opportunistic pathogen.</title>
        <authorList>
            <person name="Stover C.K."/>
            <person name="Pham X.-Q.T."/>
            <person name="Erwin A.L."/>
            <person name="Mizoguchi S.D."/>
            <person name="Warrener P."/>
            <person name="Hickey M.J."/>
            <person name="Brinkman F.S.L."/>
            <person name="Hufnagle W.O."/>
            <person name="Kowalik D.J."/>
            <person name="Lagrou M."/>
            <person name="Garber R.L."/>
            <person name="Goltry L."/>
            <person name="Tolentino E."/>
            <person name="Westbrock-Wadman S."/>
            <person name="Yuan Y."/>
            <person name="Brody L.L."/>
            <person name="Coulter S.N."/>
            <person name="Folger K.R."/>
            <person name="Kas A."/>
            <person name="Larbig K."/>
            <person name="Lim R.M."/>
            <person name="Smith K.A."/>
            <person name="Spencer D.H."/>
            <person name="Wong G.K.-S."/>
            <person name="Wu Z."/>
            <person name="Paulsen I.T."/>
            <person name="Reizer J."/>
            <person name="Saier M.H. Jr."/>
            <person name="Hancock R.E.W."/>
            <person name="Lory S."/>
            <person name="Olson M.V."/>
        </authorList>
    </citation>
    <scope>NUCLEOTIDE SEQUENCE [LARGE SCALE GENOMIC DNA]</scope>
    <source>
        <strain>ATCC 15692 / DSM 22644 / CIP 104116 / JCM 14847 / LMG 12228 / 1C / PRS 101 / PAO1</strain>
    </source>
</reference>
<sequence>MHYVTPDLCDAYPELVQVVEPMFSNFGGRDSFGGEIVTIKCFEDNSLVKEQVDKDGKGKVLVVDGGGSLRRALLGDMLAEKAAKNGWEGIVVYGCIRDVDVIAQTDLGVQALASHPLKTDKRGIGDLNVAVTFGGVTFRPGEFVYADNNGIIVSPQALKMPE</sequence>
<comment type="function">
    <text evidence="1">Catalyzes the aldol cleavage of 4-hydroxy-4-methyl-2-oxoglutarate (HMG) into 2 molecules of pyruvate. Also contains a secondary oxaloacetate (OAA) decarboxylase activity due to the common pyruvate enolate transition state formed following C-C bond cleavage in the retro-aldol and decarboxylation reactions (By similarity).</text>
</comment>
<comment type="catalytic activity">
    <reaction>
        <text>4-hydroxy-4-methyl-2-oxoglutarate = 2 pyruvate</text>
        <dbReference type="Rhea" id="RHEA:22748"/>
        <dbReference type="ChEBI" id="CHEBI:15361"/>
        <dbReference type="ChEBI" id="CHEBI:58276"/>
        <dbReference type="EC" id="4.1.3.17"/>
    </reaction>
</comment>
<comment type="catalytic activity">
    <reaction>
        <text>oxaloacetate + H(+) = pyruvate + CO2</text>
        <dbReference type="Rhea" id="RHEA:15641"/>
        <dbReference type="ChEBI" id="CHEBI:15361"/>
        <dbReference type="ChEBI" id="CHEBI:15378"/>
        <dbReference type="ChEBI" id="CHEBI:16452"/>
        <dbReference type="ChEBI" id="CHEBI:16526"/>
        <dbReference type="EC" id="4.1.1.112"/>
    </reaction>
</comment>
<comment type="cofactor">
    <cofactor evidence="1">
        <name>a divalent metal cation</name>
        <dbReference type="ChEBI" id="CHEBI:60240"/>
    </cofactor>
    <text evidence="1">Divalent metal cation.</text>
</comment>
<comment type="subunit">
    <text evidence="1">Homotrimer.</text>
</comment>
<comment type="similarity">
    <text evidence="2">Belongs to the class II aldolase/RraA-like family.</text>
</comment>
<dbReference type="EC" id="4.1.3.17"/>
<dbReference type="EC" id="4.1.1.112"/>
<dbReference type="EMBL" id="AE004091">
    <property type="protein sequence ID" value="AAG05161.1"/>
    <property type="molecule type" value="Genomic_DNA"/>
</dbReference>
<dbReference type="PIR" id="B83423">
    <property type="entry name" value="B83423"/>
</dbReference>
<dbReference type="RefSeq" id="NP_250463.1">
    <property type="nucleotide sequence ID" value="NC_002516.2"/>
</dbReference>
<dbReference type="PDB" id="3C8O">
    <property type="method" value="X-ray"/>
    <property type="resolution" value="1.90 A"/>
    <property type="chains" value="A/B=1-162"/>
</dbReference>
<dbReference type="PDBsum" id="3C8O"/>
<dbReference type="SMR" id="Q9I2W7"/>
<dbReference type="FunCoup" id="Q9I2W7">
    <property type="interactions" value="67"/>
</dbReference>
<dbReference type="STRING" id="208964.PA1772"/>
<dbReference type="PaxDb" id="208964-PA1772"/>
<dbReference type="GeneID" id="880779"/>
<dbReference type="KEGG" id="pae:PA1772"/>
<dbReference type="PATRIC" id="fig|208964.12.peg.1837"/>
<dbReference type="PseudoCAP" id="PA1772"/>
<dbReference type="HOGENOM" id="CLU_072626_4_0_6"/>
<dbReference type="InParanoid" id="Q9I2W7"/>
<dbReference type="OrthoDB" id="943692at2"/>
<dbReference type="PhylomeDB" id="Q9I2W7"/>
<dbReference type="BioCyc" id="PAER208964:G1FZ6-1803-MONOMER"/>
<dbReference type="EvolutionaryTrace" id="Q9I2W7"/>
<dbReference type="Proteomes" id="UP000002438">
    <property type="component" value="Chromosome"/>
</dbReference>
<dbReference type="GO" id="GO:0047443">
    <property type="term" value="F:4-hydroxy-4-methyl-2-oxoglutarate aldolase activity"/>
    <property type="evidence" value="ECO:0007669"/>
    <property type="project" value="UniProtKB-EC"/>
</dbReference>
<dbReference type="GO" id="GO:0046872">
    <property type="term" value="F:metal ion binding"/>
    <property type="evidence" value="ECO:0007669"/>
    <property type="project" value="UniProtKB-KW"/>
</dbReference>
<dbReference type="GO" id="GO:0008948">
    <property type="term" value="F:oxaloacetate decarboxylase activity"/>
    <property type="evidence" value="ECO:0007669"/>
    <property type="project" value="UniProtKB-EC"/>
</dbReference>
<dbReference type="GO" id="GO:0008428">
    <property type="term" value="F:ribonuclease inhibitor activity"/>
    <property type="evidence" value="ECO:0007669"/>
    <property type="project" value="InterPro"/>
</dbReference>
<dbReference type="GO" id="GO:0051252">
    <property type="term" value="P:regulation of RNA metabolic process"/>
    <property type="evidence" value="ECO:0007669"/>
    <property type="project" value="InterPro"/>
</dbReference>
<dbReference type="CDD" id="cd16841">
    <property type="entry name" value="RraA_family"/>
    <property type="match status" value="1"/>
</dbReference>
<dbReference type="Gene3D" id="3.50.30.40">
    <property type="entry name" value="Ribonuclease E inhibitor RraA/RraA-like"/>
    <property type="match status" value="1"/>
</dbReference>
<dbReference type="InterPro" id="IPR010203">
    <property type="entry name" value="RraA"/>
</dbReference>
<dbReference type="InterPro" id="IPR005493">
    <property type="entry name" value="RraA/RraA-like"/>
</dbReference>
<dbReference type="InterPro" id="IPR036704">
    <property type="entry name" value="RraA/RraA-like_sf"/>
</dbReference>
<dbReference type="NCBIfam" id="TIGR01935">
    <property type="entry name" value="NOT-MenG"/>
    <property type="match status" value="1"/>
</dbReference>
<dbReference type="NCBIfam" id="NF006875">
    <property type="entry name" value="PRK09372.1"/>
    <property type="match status" value="1"/>
</dbReference>
<dbReference type="NCBIfam" id="NF009134">
    <property type="entry name" value="PRK12487.1"/>
    <property type="match status" value="1"/>
</dbReference>
<dbReference type="PANTHER" id="PTHR33254">
    <property type="entry name" value="4-HYDROXY-4-METHYL-2-OXOGLUTARATE ALDOLASE 3-RELATED"/>
    <property type="match status" value="1"/>
</dbReference>
<dbReference type="PANTHER" id="PTHR33254:SF29">
    <property type="entry name" value="REGULATOR OF RIBONUCLEASE ACTIVITY A"/>
    <property type="match status" value="1"/>
</dbReference>
<dbReference type="Pfam" id="PF03737">
    <property type="entry name" value="RraA-like"/>
    <property type="match status" value="1"/>
</dbReference>
<dbReference type="SUPFAM" id="SSF89562">
    <property type="entry name" value="RraA-like"/>
    <property type="match status" value="1"/>
</dbReference>
<protein>
    <recommendedName>
        <fullName>Putative 4-hydroxy-4-methyl-2-oxoglutarate aldolase</fullName>
        <shortName>HMG aldolase</shortName>
        <ecNumber>4.1.3.17</ecNumber>
    </recommendedName>
    <alternativeName>
        <fullName>Oxaloacetate decarboxylase</fullName>
        <shortName>OAA decarboxylase</shortName>
        <ecNumber>4.1.1.112</ecNumber>
    </alternativeName>
    <alternativeName>
        <fullName>Regulator of ribonuclease activity homolog</fullName>
    </alternativeName>
    <alternativeName>
        <fullName>RraA-like protein</fullName>
    </alternativeName>
</protein>
<accession>Q9I2W7</accession>
<gene>
    <name type="ordered locus">PA1772</name>
</gene>